<reference key="1">
    <citation type="journal article" date="2004" name="Nat. Genet.">
        <title>Complete sequencing and characterization of 21,243 full-length human cDNAs.</title>
        <authorList>
            <person name="Ota T."/>
            <person name="Suzuki Y."/>
            <person name="Nishikawa T."/>
            <person name="Otsuki T."/>
            <person name="Sugiyama T."/>
            <person name="Irie R."/>
            <person name="Wakamatsu A."/>
            <person name="Hayashi K."/>
            <person name="Sato H."/>
            <person name="Nagai K."/>
            <person name="Kimura K."/>
            <person name="Makita H."/>
            <person name="Sekine M."/>
            <person name="Obayashi M."/>
            <person name="Nishi T."/>
            <person name="Shibahara T."/>
            <person name="Tanaka T."/>
            <person name="Ishii S."/>
            <person name="Yamamoto J."/>
            <person name="Saito K."/>
            <person name="Kawai Y."/>
            <person name="Isono Y."/>
            <person name="Nakamura Y."/>
            <person name="Nagahari K."/>
            <person name="Murakami K."/>
            <person name="Yasuda T."/>
            <person name="Iwayanagi T."/>
            <person name="Wagatsuma M."/>
            <person name="Shiratori A."/>
            <person name="Sudo H."/>
            <person name="Hosoiri T."/>
            <person name="Kaku Y."/>
            <person name="Kodaira H."/>
            <person name="Kondo H."/>
            <person name="Sugawara M."/>
            <person name="Takahashi M."/>
            <person name="Kanda K."/>
            <person name="Yokoi T."/>
            <person name="Furuya T."/>
            <person name="Kikkawa E."/>
            <person name="Omura Y."/>
            <person name="Abe K."/>
            <person name="Kamihara K."/>
            <person name="Katsuta N."/>
            <person name="Sato K."/>
            <person name="Tanikawa M."/>
            <person name="Yamazaki M."/>
            <person name="Ninomiya K."/>
            <person name="Ishibashi T."/>
            <person name="Yamashita H."/>
            <person name="Murakawa K."/>
            <person name="Fujimori K."/>
            <person name="Tanai H."/>
            <person name="Kimata M."/>
            <person name="Watanabe M."/>
            <person name="Hiraoka S."/>
            <person name="Chiba Y."/>
            <person name="Ishida S."/>
            <person name="Ono Y."/>
            <person name="Takiguchi S."/>
            <person name="Watanabe S."/>
            <person name="Yosida M."/>
            <person name="Hotuta T."/>
            <person name="Kusano J."/>
            <person name="Kanehori K."/>
            <person name="Takahashi-Fujii A."/>
            <person name="Hara H."/>
            <person name="Tanase T.-O."/>
            <person name="Nomura Y."/>
            <person name="Togiya S."/>
            <person name="Komai F."/>
            <person name="Hara R."/>
            <person name="Takeuchi K."/>
            <person name="Arita M."/>
            <person name="Imose N."/>
            <person name="Musashino K."/>
            <person name="Yuuki H."/>
            <person name="Oshima A."/>
            <person name="Sasaki N."/>
            <person name="Aotsuka S."/>
            <person name="Yoshikawa Y."/>
            <person name="Matsunawa H."/>
            <person name="Ichihara T."/>
            <person name="Shiohata N."/>
            <person name="Sano S."/>
            <person name="Moriya S."/>
            <person name="Momiyama H."/>
            <person name="Satoh N."/>
            <person name="Takami S."/>
            <person name="Terashima Y."/>
            <person name="Suzuki O."/>
            <person name="Nakagawa S."/>
            <person name="Senoh A."/>
            <person name="Mizoguchi H."/>
            <person name="Goto Y."/>
            <person name="Shimizu F."/>
            <person name="Wakebe H."/>
            <person name="Hishigaki H."/>
            <person name="Watanabe T."/>
            <person name="Sugiyama A."/>
            <person name="Takemoto M."/>
            <person name="Kawakami B."/>
            <person name="Yamazaki M."/>
            <person name="Watanabe K."/>
            <person name="Kumagai A."/>
            <person name="Itakura S."/>
            <person name="Fukuzumi Y."/>
            <person name="Fujimori Y."/>
            <person name="Komiyama M."/>
            <person name="Tashiro H."/>
            <person name="Tanigami A."/>
            <person name="Fujiwara T."/>
            <person name="Ono T."/>
            <person name="Yamada K."/>
            <person name="Fujii Y."/>
            <person name="Ozaki K."/>
            <person name="Hirao M."/>
            <person name="Ohmori Y."/>
            <person name="Kawabata A."/>
            <person name="Hikiji T."/>
            <person name="Kobatake N."/>
            <person name="Inagaki H."/>
            <person name="Ikema Y."/>
            <person name="Okamoto S."/>
            <person name="Okitani R."/>
            <person name="Kawakami T."/>
            <person name="Noguchi S."/>
            <person name="Itoh T."/>
            <person name="Shigeta K."/>
            <person name="Senba T."/>
            <person name="Matsumura K."/>
            <person name="Nakajima Y."/>
            <person name="Mizuno T."/>
            <person name="Morinaga M."/>
            <person name="Sasaki M."/>
            <person name="Togashi T."/>
            <person name="Oyama M."/>
            <person name="Hata H."/>
            <person name="Watanabe M."/>
            <person name="Komatsu T."/>
            <person name="Mizushima-Sugano J."/>
            <person name="Satoh T."/>
            <person name="Shirai Y."/>
            <person name="Takahashi Y."/>
            <person name="Nakagawa K."/>
            <person name="Okumura K."/>
            <person name="Nagase T."/>
            <person name="Nomura N."/>
            <person name="Kikuchi H."/>
            <person name="Masuho Y."/>
            <person name="Yamashita R."/>
            <person name="Nakai K."/>
            <person name="Yada T."/>
            <person name="Nakamura Y."/>
            <person name="Ohara O."/>
            <person name="Isogai T."/>
            <person name="Sugano S."/>
        </authorList>
    </citation>
    <scope>NUCLEOTIDE SEQUENCE [LARGE SCALE MRNA] (ISOFORM 3)</scope>
    <source>
        <tissue>Hippocampus</tissue>
    </source>
</reference>
<reference key="2">
    <citation type="journal article" date="2004" name="Nature">
        <title>DNA sequence and analysis of human chromosome 9.</title>
        <authorList>
            <person name="Humphray S.J."/>
            <person name="Oliver K."/>
            <person name="Hunt A.R."/>
            <person name="Plumb R.W."/>
            <person name="Loveland J.E."/>
            <person name="Howe K.L."/>
            <person name="Andrews T.D."/>
            <person name="Searle S."/>
            <person name="Hunt S.E."/>
            <person name="Scott C.E."/>
            <person name="Jones M.C."/>
            <person name="Ainscough R."/>
            <person name="Almeida J.P."/>
            <person name="Ambrose K.D."/>
            <person name="Ashwell R.I.S."/>
            <person name="Babbage A.K."/>
            <person name="Babbage S."/>
            <person name="Bagguley C.L."/>
            <person name="Bailey J."/>
            <person name="Banerjee R."/>
            <person name="Barker D.J."/>
            <person name="Barlow K.F."/>
            <person name="Bates K."/>
            <person name="Beasley H."/>
            <person name="Beasley O."/>
            <person name="Bird C.P."/>
            <person name="Bray-Allen S."/>
            <person name="Brown A.J."/>
            <person name="Brown J.Y."/>
            <person name="Burford D."/>
            <person name="Burrill W."/>
            <person name="Burton J."/>
            <person name="Carder C."/>
            <person name="Carter N.P."/>
            <person name="Chapman J.C."/>
            <person name="Chen Y."/>
            <person name="Clarke G."/>
            <person name="Clark S.Y."/>
            <person name="Clee C.M."/>
            <person name="Clegg S."/>
            <person name="Collier R.E."/>
            <person name="Corby N."/>
            <person name="Crosier M."/>
            <person name="Cummings A.T."/>
            <person name="Davies J."/>
            <person name="Dhami P."/>
            <person name="Dunn M."/>
            <person name="Dutta I."/>
            <person name="Dyer L.W."/>
            <person name="Earthrowl M.E."/>
            <person name="Faulkner L."/>
            <person name="Fleming C.J."/>
            <person name="Frankish A."/>
            <person name="Frankland J.A."/>
            <person name="French L."/>
            <person name="Fricker D.G."/>
            <person name="Garner P."/>
            <person name="Garnett J."/>
            <person name="Ghori J."/>
            <person name="Gilbert J.G.R."/>
            <person name="Glison C."/>
            <person name="Grafham D.V."/>
            <person name="Gribble S."/>
            <person name="Griffiths C."/>
            <person name="Griffiths-Jones S."/>
            <person name="Grocock R."/>
            <person name="Guy J."/>
            <person name="Hall R.E."/>
            <person name="Hammond S."/>
            <person name="Harley J.L."/>
            <person name="Harrison E.S.I."/>
            <person name="Hart E.A."/>
            <person name="Heath P.D."/>
            <person name="Henderson C.D."/>
            <person name="Hopkins B.L."/>
            <person name="Howard P.J."/>
            <person name="Howden P.J."/>
            <person name="Huckle E."/>
            <person name="Johnson C."/>
            <person name="Johnson D."/>
            <person name="Joy A.A."/>
            <person name="Kay M."/>
            <person name="Keenan S."/>
            <person name="Kershaw J.K."/>
            <person name="Kimberley A.M."/>
            <person name="King A."/>
            <person name="Knights A."/>
            <person name="Laird G.K."/>
            <person name="Langford C."/>
            <person name="Lawlor S."/>
            <person name="Leongamornlert D.A."/>
            <person name="Leversha M."/>
            <person name="Lloyd C."/>
            <person name="Lloyd D.M."/>
            <person name="Lovell J."/>
            <person name="Martin S."/>
            <person name="Mashreghi-Mohammadi M."/>
            <person name="Matthews L."/>
            <person name="McLaren S."/>
            <person name="McLay K.E."/>
            <person name="McMurray A."/>
            <person name="Milne S."/>
            <person name="Nickerson T."/>
            <person name="Nisbett J."/>
            <person name="Nordsiek G."/>
            <person name="Pearce A.V."/>
            <person name="Peck A.I."/>
            <person name="Porter K.M."/>
            <person name="Pandian R."/>
            <person name="Pelan S."/>
            <person name="Phillimore B."/>
            <person name="Povey S."/>
            <person name="Ramsey Y."/>
            <person name="Rand V."/>
            <person name="Scharfe M."/>
            <person name="Sehra H.K."/>
            <person name="Shownkeen R."/>
            <person name="Sims S.K."/>
            <person name="Skuce C.D."/>
            <person name="Smith M."/>
            <person name="Steward C.A."/>
            <person name="Swarbreck D."/>
            <person name="Sycamore N."/>
            <person name="Tester J."/>
            <person name="Thorpe A."/>
            <person name="Tracey A."/>
            <person name="Tromans A."/>
            <person name="Thomas D.W."/>
            <person name="Wall M."/>
            <person name="Wallis J.M."/>
            <person name="West A.P."/>
            <person name="Whitehead S.L."/>
            <person name="Willey D.L."/>
            <person name="Williams S.A."/>
            <person name="Wilming L."/>
            <person name="Wray P.W."/>
            <person name="Young L."/>
            <person name="Ashurst J.L."/>
            <person name="Coulson A."/>
            <person name="Blocker H."/>
            <person name="Durbin R.M."/>
            <person name="Sulston J.E."/>
            <person name="Hubbard T."/>
            <person name="Jackson M.J."/>
            <person name="Bentley D.R."/>
            <person name="Beck S."/>
            <person name="Rogers J."/>
            <person name="Dunham I."/>
        </authorList>
    </citation>
    <scope>NUCLEOTIDE SEQUENCE [LARGE SCALE GENOMIC DNA]</scope>
</reference>
<reference key="3">
    <citation type="journal article" date="2004" name="Genome Res.">
        <title>The status, quality, and expansion of the NIH full-length cDNA project: the Mammalian Gene Collection (MGC).</title>
        <authorList>
            <consortium name="The MGC Project Team"/>
        </authorList>
    </citation>
    <scope>NUCLEOTIDE SEQUENCE [LARGE SCALE MRNA] (ISOFORMS 1 AND 2)</scope>
    <scope>VARIANT GLY-243</scope>
    <source>
        <tissue>Brain</tissue>
    </source>
</reference>
<gene>
    <name type="primary">SPATA6L</name>
    <name type="synonym">C9orf68</name>
</gene>
<sequence>MPLEVVVELQIRAISCPGVFLPGKQDVYLGVYLMNQYLETNSFPSAFPIMIQESMRFEKVFESAVDPGAVVDLLEMWDELAYYEENTRDFLFPEPKLTPSHPRRCREVLMKTALGFPGIAPKIEFSTRTAIRECVFLHRNRFLEERHESRRPLSTSHEPIFPLNTIKMKLKENNLNRLPKGMQARAPSQYSTRHFFQDQPAQLNLGNNFKISGGSKPPFVVRHVDSAKPFGENISEHHLRRSRRKSKFSDFPFPTRRASSLDSLAANVKVIKEPDERIVLRSDSSSCLDSSQFGKSSSSKQGDADFHGKASFATYQHSTSPGPLDQPLLRERFHPGSQSTWKNIHERVCSLLTSHRAQLHQNKEDSTSEVNYIIERPSYPLKKYSLHEQRYF</sequence>
<feature type="chain" id="PRO_0000089704" description="Spermatogenesis associated 6-like protein">
    <location>
        <begin position="1"/>
        <end position="392"/>
    </location>
</feature>
<feature type="region of interest" description="Disordered" evidence="3">
    <location>
        <begin position="286"/>
        <end position="305"/>
    </location>
</feature>
<feature type="compositionally biased region" description="Low complexity" evidence="3">
    <location>
        <begin position="286"/>
        <end position="301"/>
    </location>
</feature>
<feature type="modified residue" description="Phosphoserine" evidence="2">
    <location>
        <position position="260"/>
    </location>
</feature>
<feature type="modified residue" description="Phosphoserine" evidence="1">
    <location>
        <position position="263"/>
    </location>
</feature>
<feature type="splice variant" id="VSP_043770" description="In isoform 3." evidence="5">
    <location>
        <begin position="60"/>
        <end position="117"/>
    </location>
</feature>
<feature type="splice variant" id="VSP_014315" description="In isoform 2." evidence="6">
    <original>M</original>
    <variation>SFLARFELIQLVPPV</variation>
    <location>
        <position position="76"/>
    </location>
</feature>
<feature type="splice variant" id="VSP_014316" description="In isoform 2." evidence="6">
    <original>EERHESRR</original>
    <variation>VDSKSWLL</variation>
    <location>
        <begin position="144"/>
        <end position="151"/>
    </location>
</feature>
<feature type="splice variant" id="VSP_014317" description="In isoform 2." evidence="6">
    <location>
        <begin position="152"/>
        <end position="392"/>
    </location>
</feature>
<feature type="sequence variant" id="VAR_053838" description="In dbSNP:rs10974657." evidence="4">
    <original>R</original>
    <variation>G</variation>
    <location>
        <position position="243"/>
    </location>
</feature>
<feature type="sequence variant" id="VAR_053839" description="In dbSNP:rs16921613.">
    <original>A</original>
    <variation>T</variation>
    <location>
        <position position="310"/>
    </location>
</feature>
<feature type="sequence conflict" description="In Ref. 3; AAH34293." evidence="7" ref="3">
    <original>K</original>
    <variation>R</variation>
    <location>
        <position position="171"/>
    </location>
</feature>
<proteinExistence type="evidence at protein level"/>
<name>SPA6L_HUMAN</name>
<accession>Q8N4H0</accession>
<accession>B4DIY4</accession>
<accession>Q5JVJ5</accession>
<accession>Q8IY90</accession>
<comment type="alternative products">
    <event type="alternative splicing"/>
    <isoform>
        <id>Q8N4H0-1</id>
        <name>1</name>
        <sequence type="displayed"/>
    </isoform>
    <isoform>
        <id>Q8N4H0-2</id>
        <name>2</name>
        <sequence type="described" ref="VSP_014315 VSP_014316 VSP_014317"/>
    </isoform>
    <isoform>
        <id>Q8N4H0-3</id>
        <name>3</name>
        <sequence type="described" ref="VSP_043770"/>
    </isoform>
</comment>
<comment type="miscellaneous">
    <molecule>Isoform 1</molecule>
    <text>May be produced at very low levels due to a premature stop codon in the mRNA, leading to nonsense-mediated mRNA decay.</text>
</comment>
<comment type="similarity">
    <text evidence="7">Belongs to the SPATA6 family.</text>
</comment>
<evidence type="ECO:0000250" key="1">
    <source>
        <dbReference type="UniProtKB" id="B2RV46"/>
    </source>
</evidence>
<evidence type="ECO:0000250" key="2">
    <source>
        <dbReference type="UniProtKB" id="Q6AYJ3"/>
    </source>
</evidence>
<evidence type="ECO:0000256" key="3">
    <source>
        <dbReference type="SAM" id="MobiDB-lite"/>
    </source>
</evidence>
<evidence type="ECO:0000269" key="4">
    <source>
    </source>
</evidence>
<evidence type="ECO:0000303" key="5">
    <source>
    </source>
</evidence>
<evidence type="ECO:0000303" key="6">
    <source>
    </source>
</evidence>
<evidence type="ECO:0000305" key="7"/>
<keyword id="KW-0025">Alternative splicing</keyword>
<keyword id="KW-0597">Phosphoprotein</keyword>
<keyword id="KW-1267">Proteomics identification</keyword>
<keyword id="KW-1185">Reference proteome</keyword>
<protein>
    <recommendedName>
        <fullName>Spermatogenesis associated 6-like protein</fullName>
    </recommendedName>
</protein>
<organism>
    <name type="scientific">Homo sapiens</name>
    <name type="common">Human</name>
    <dbReference type="NCBI Taxonomy" id="9606"/>
    <lineage>
        <taxon>Eukaryota</taxon>
        <taxon>Metazoa</taxon>
        <taxon>Chordata</taxon>
        <taxon>Craniata</taxon>
        <taxon>Vertebrata</taxon>
        <taxon>Euteleostomi</taxon>
        <taxon>Mammalia</taxon>
        <taxon>Eutheria</taxon>
        <taxon>Euarchontoglires</taxon>
        <taxon>Primates</taxon>
        <taxon>Haplorrhini</taxon>
        <taxon>Catarrhini</taxon>
        <taxon>Hominidae</taxon>
        <taxon>Homo</taxon>
    </lineage>
</organism>
<dbReference type="EMBL" id="AK295831">
    <property type="protein sequence ID" value="BAG58646.1"/>
    <property type="molecule type" value="mRNA"/>
</dbReference>
<dbReference type="EMBL" id="AL136231">
    <property type="status" value="NOT_ANNOTATED_CDS"/>
    <property type="molecule type" value="Genomic_DNA"/>
</dbReference>
<dbReference type="EMBL" id="BC034293">
    <property type="protein sequence ID" value="AAH34293.1"/>
    <property type="molecule type" value="mRNA"/>
</dbReference>
<dbReference type="EMBL" id="BC036349">
    <property type="status" value="NOT_ANNOTATED_CDS"/>
    <property type="molecule type" value="mRNA"/>
</dbReference>
<dbReference type="CCDS" id="CCDS43785.2">
    <molecule id="Q8N4H0-3"/>
</dbReference>
<dbReference type="CCDS" id="CCDS6453.1">
    <molecule id="Q8N4H0-1"/>
</dbReference>
<dbReference type="RefSeq" id="NP_001034484.3">
    <molecule id="Q8N4H0-3"/>
    <property type="nucleotide sequence ID" value="NM_001039395.4"/>
</dbReference>
<dbReference type="RefSeq" id="NP_001340415.1">
    <molecule id="Q8N4H0-1"/>
    <property type="nucleotide sequence ID" value="NM_001353486.2"/>
</dbReference>
<dbReference type="RefSeq" id="XP_006716862.1">
    <property type="nucleotide sequence ID" value="XM_006716799.3"/>
</dbReference>
<dbReference type="BioGRID" id="120382">
    <property type="interactions" value="6"/>
</dbReference>
<dbReference type="FunCoup" id="Q8N4H0">
    <property type="interactions" value="27"/>
</dbReference>
<dbReference type="IntAct" id="Q8N4H0">
    <property type="interactions" value="4"/>
</dbReference>
<dbReference type="MINT" id="Q8N4H0"/>
<dbReference type="STRING" id="9606.ENSP00000417063"/>
<dbReference type="GlyGen" id="Q8N4H0">
    <property type="glycosylation" value="1 site, 1 O-linked glycan (1 site)"/>
</dbReference>
<dbReference type="iPTMnet" id="Q8N4H0"/>
<dbReference type="PhosphoSitePlus" id="Q8N4H0"/>
<dbReference type="BioMuta" id="SPATA6L"/>
<dbReference type="DMDM" id="68565209"/>
<dbReference type="MassIVE" id="Q8N4H0"/>
<dbReference type="PeptideAtlas" id="Q8N4H0"/>
<dbReference type="Antibodypedia" id="24022">
    <property type="antibodies" value="65 antibodies from 12 providers"/>
</dbReference>
<dbReference type="DNASU" id="55064"/>
<dbReference type="Ensembl" id="ENST00000406861.6">
    <molecule id="Q8N4H0-2"/>
    <property type="protein sequence ID" value="ENSP00000384342.2"/>
    <property type="gene ID" value="ENSG00000106686.18"/>
</dbReference>
<dbReference type="Ensembl" id="ENST00000461761.5">
    <molecule id="Q8N4H0-1"/>
    <property type="protein sequence ID" value="ENSP00000418458.1"/>
    <property type="gene ID" value="ENSG00000106686.18"/>
</dbReference>
<dbReference type="Ensembl" id="ENST00000475086.5">
    <molecule id="Q8N4H0-3"/>
    <property type="protein sequence ID" value="ENSP00000417063.1"/>
    <property type="gene ID" value="ENSG00000106686.18"/>
</dbReference>
<dbReference type="Ensembl" id="ENST00000486047.5">
    <molecule id="Q8N4H0-2"/>
    <property type="protein sequence ID" value="ENSP00000417965.1"/>
    <property type="gene ID" value="ENSG00000106686.18"/>
</dbReference>
<dbReference type="Ensembl" id="ENST00000682582.1">
    <molecule id="Q8N4H0-1"/>
    <property type="protein sequence ID" value="ENSP00000506787.1"/>
    <property type="gene ID" value="ENSG00000106686.18"/>
</dbReference>
<dbReference type="GeneID" id="55064"/>
<dbReference type="KEGG" id="hsa:55064"/>
<dbReference type="MANE-Select" id="ENST00000682582.1">
    <property type="protein sequence ID" value="ENSP00000506787.1"/>
    <property type="RefSeq nucleotide sequence ID" value="NM_001353486.2"/>
    <property type="RefSeq protein sequence ID" value="NP_001340415.1"/>
</dbReference>
<dbReference type="UCSC" id="uc003zil.4">
    <molecule id="Q8N4H0-1"/>
    <property type="organism name" value="human"/>
</dbReference>
<dbReference type="AGR" id="HGNC:25472"/>
<dbReference type="CTD" id="55064"/>
<dbReference type="DisGeNET" id="55064"/>
<dbReference type="GeneCards" id="SPATA6L"/>
<dbReference type="HGNC" id="HGNC:25472">
    <property type="gene designation" value="SPATA6L"/>
</dbReference>
<dbReference type="HPA" id="ENSG00000106686">
    <property type="expression patterns" value="Low tissue specificity"/>
</dbReference>
<dbReference type="MalaCards" id="SPATA6L"/>
<dbReference type="neXtProt" id="NX_Q8N4H0"/>
<dbReference type="OpenTargets" id="ENSG00000106686"/>
<dbReference type="PharmGKB" id="PA134880636"/>
<dbReference type="VEuPathDB" id="HostDB:ENSG00000106686"/>
<dbReference type="GeneTree" id="ENSGT00530000063821"/>
<dbReference type="HOGENOM" id="CLU_038272_1_0_1"/>
<dbReference type="InParanoid" id="Q8N4H0"/>
<dbReference type="OMA" id="ADFHWET"/>
<dbReference type="OrthoDB" id="5963614at2759"/>
<dbReference type="PAN-GO" id="Q8N4H0">
    <property type="GO annotations" value="0 GO annotations based on evolutionary models"/>
</dbReference>
<dbReference type="PhylomeDB" id="Q8N4H0"/>
<dbReference type="TreeFam" id="TF328520"/>
<dbReference type="PathwayCommons" id="Q8N4H0"/>
<dbReference type="SignaLink" id="Q8N4H0"/>
<dbReference type="BioGRID-ORCS" id="55064">
    <property type="hits" value="10 hits in 1142 CRISPR screens"/>
</dbReference>
<dbReference type="ChiTaRS" id="SPATA6L">
    <property type="organism name" value="human"/>
</dbReference>
<dbReference type="GenomeRNAi" id="55064"/>
<dbReference type="Pharos" id="Q8N4H0">
    <property type="development level" value="Tdark"/>
</dbReference>
<dbReference type="PRO" id="PR:Q8N4H0"/>
<dbReference type="Proteomes" id="UP000005640">
    <property type="component" value="Chromosome 9"/>
</dbReference>
<dbReference type="RNAct" id="Q8N4H0">
    <property type="molecule type" value="protein"/>
</dbReference>
<dbReference type="Bgee" id="ENSG00000106686">
    <property type="expression patterns" value="Expressed in oocyte and 118 other cell types or tissues"/>
</dbReference>
<dbReference type="ExpressionAtlas" id="Q8N4H0">
    <property type="expression patterns" value="baseline and differential"/>
</dbReference>
<dbReference type="GO" id="GO:0120212">
    <property type="term" value="C:sperm head-tail coupling apparatus"/>
    <property type="evidence" value="ECO:0007669"/>
    <property type="project" value="InterPro"/>
</dbReference>
<dbReference type="GO" id="GO:0032027">
    <property type="term" value="F:myosin light chain binding"/>
    <property type="evidence" value="ECO:0007669"/>
    <property type="project" value="InterPro"/>
</dbReference>
<dbReference type="GO" id="GO:0007283">
    <property type="term" value="P:spermatogenesis"/>
    <property type="evidence" value="ECO:0007669"/>
    <property type="project" value="InterPro"/>
</dbReference>
<dbReference type="InterPro" id="IPR042769">
    <property type="entry name" value="SPATA6_fam"/>
</dbReference>
<dbReference type="InterPro" id="IPR032732">
    <property type="entry name" value="SPATA6_N"/>
</dbReference>
<dbReference type="PANTHER" id="PTHR16435:SF5">
    <property type="entry name" value="SPERMATOGENESIS ASSOCIATED 6-LIKE PROTEIN"/>
    <property type="match status" value="1"/>
</dbReference>
<dbReference type="PANTHER" id="PTHR16435">
    <property type="entry name" value="SPERMATOGENESIS-ASSOCIATED PROTEIN 6 SPATA6"/>
    <property type="match status" value="1"/>
</dbReference>
<dbReference type="Pfam" id="PF14909">
    <property type="entry name" value="SPATA6"/>
    <property type="match status" value="1"/>
</dbReference>